<reference key="1">
    <citation type="journal article" date="2010" name="PLoS ONE">
        <title>Genome sequence of Cronobacter sakazakii BAA-894 and comparative genomic hybridization analysis with other Cronobacter species.</title>
        <authorList>
            <person name="Kucerova E."/>
            <person name="Clifton S.W."/>
            <person name="Xia X.Q."/>
            <person name="Long F."/>
            <person name="Porwollik S."/>
            <person name="Fulton L."/>
            <person name="Fronick C."/>
            <person name="Minx P."/>
            <person name="Kyung K."/>
            <person name="Warren W."/>
            <person name="Fulton R."/>
            <person name="Feng D."/>
            <person name="Wollam A."/>
            <person name="Shah N."/>
            <person name="Bhonagiri V."/>
            <person name="Nash W.E."/>
            <person name="Hallsworth-Pepin K."/>
            <person name="Wilson R.K."/>
            <person name="McClelland M."/>
            <person name="Forsythe S.J."/>
        </authorList>
    </citation>
    <scope>NUCLEOTIDE SEQUENCE [LARGE SCALE GENOMIC DNA]</scope>
    <source>
        <strain>ATCC BAA-894</strain>
    </source>
</reference>
<sequence length="165" mass="17686">MALNLQDKQAIVAEVSEVAKGALSAVVADSRGVTVDKMTELRKAGREAGVYMRVVRNTLLRRAVEGTAFECLKDAFVGPTLIAYSMEHPGAAARLFKEFAKANAKFEVKAAAFEGELIPASQIDRLATLPTYEEAIARLMSTMKEAAAGKLVRTLAAVRDAKEAA</sequence>
<name>RL10_CROS8</name>
<keyword id="KW-1185">Reference proteome</keyword>
<keyword id="KW-0687">Ribonucleoprotein</keyword>
<keyword id="KW-0689">Ribosomal protein</keyword>
<keyword id="KW-0694">RNA-binding</keyword>
<keyword id="KW-0699">rRNA-binding</keyword>
<evidence type="ECO:0000255" key="1">
    <source>
        <dbReference type="HAMAP-Rule" id="MF_00362"/>
    </source>
</evidence>
<evidence type="ECO:0000305" key="2"/>
<comment type="function">
    <text evidence="1">Forms part of the ribosomal stalk, playing a central role in the interaction of the ribosome with GTP-bound translation factors.</text>
</comment>
<comment type="subunit">
    <text evidence="1">Part of the ribosomal stalk of the 50S ribosomal subunit. The N-terminus interacts with L11 and the large rRNA to form the base of the stalk. The C-terminus forms an elongated spine to which L12 dimers bind in a sequential fashion forming a multimeric L10(L12)X complex.</text>
</comment>
<comment type="similarity">
    <text evidence="1">Belongs to the universal ribosomal protein uL10 family.</text>
</comment>
<proteinExistence type="inferred from homology"/>
<organism>
    <name type="scientific">Cronobacter sakazakii (strain ATCC BAA-894)</name>
    <name type="common">Enterobacter sakazakii</name>
    <dbReference type="NCBI Taxonomy" id="290339"/>
    <lineage>
        <taxon>Bacteria</taxon>
        <taxon>Pseudomonadati</taxon>
        <taxon>Pseudomonadota</taxon>
        <taxon>Gammaproteobacteria</taxon>
        <taxon>Enterobacterales</taxon>
        <taxon>Enterobacteriaceae</taxon>
        <taxon>Cronobacter</taxon>
    </lineage>
</organism>
<gene>
    <name evidence="1" type="primary">rplJ</name>
    <name type="ordered locus">ESA_03693</name>
</gene>
<dbReference type="EMBL" id="CP000783">
    <property type="protein sequence ID" value="ABU78897.1"/>
    <property type="molecule type" value="Genomic_DNA"/>
</dbReference>
<dbReference type="RefSeq" id="WP_004387080.1">
    <property type="nucleotide sequence ID" value="NC_009778.1"/>
</dbReference>
<dbReference type="GeneID" id="56732345"/>
<dbReference type="KEGG" id="esa:ESA_03693"/>
<dbReference type="HOGENOM" id="CLU_092227_0_2_6"/>
<dbReference type="Proteomes" id="UP000000260">
    <property type="component" value="Chromosome"/>
</dbReference>
<dbReference type="GO" id="GO:0015934">
    <property type="term" value="C:large ribosomal subunit"/>
    <property type="evidence" value="ECO:0007669"/>
    <property type="project" value="InterPro"/>
</dbReference>
<dbReference type="GO" id="GO:0070180">
    <property type="term" value="F:large ribosomal subunit rRNA binding"/>
    <property type="evidence" value="ECO:0007669"/>
    <property type="project" value="UniProtKB-UniRule"/>
</dbReference>
<dbReference type="GO" id="GO:0003735">
    <property type="term" value="F:structural constituent of ribosome"/>
    <property type="evidence" value="ECO:0007669"/>
    <property type="project" value="InterPro"/>
</dbReference>
<dbReference type="GO" id="GO:0006412">
    <property type="term" value="P:translation"/>
    <property type="evidence" value="ECO:0007669"/>
    <property type="project" value="UniProtKB-UniRule"/>
</dbReference>
<dbReference type="CDD" id="cd05797">
    <property type="entry name" value="Ribosomal_L10"/>
    <property type="match status" value="1"/>
</dbReference>
<dbReference type="FunFam" id="3.30.70.1730:FF:000001">
    <property type="entry name" value="50S ribosomal protein L10"/>
    <property type="match status" value="1"/>
</dbReference>
<dbReference type="Gene3D" id="3.30.70.1730">
    <property type="match status" value="1"/>
</dbReference>
<dbReference type="Gene3D" id="6.10.250.2350">
    <property type="match status" value="1"/>
</dbReference>
<dbReference type="HAMAP" id="MF_00362">
    <property type="entry name" value="Ribosomal_uL10"/>
    <property type="match status" value="1"/>
</dbReference>
<dbReference type="InterPro" id="IPR001790">
    <property type="entry name" value="Ribosomal_uL10"/>
</dbReference>
<dbReference type="InterPro" id="IPR043141">
    <property type="entry name" value="Ribosomal_uL10-like_sf"/>
</dbReference>
<dbReference type="InterPro" id="IPR022973">
    <property type="entry name" value="Ribosomal_uL10_bac"/>
</dbReference>
<dbReference type="InterPro" id="IPR047865">
    <property type="entry name" value="Ribosomal_uL10_bac_type"/>
</dbReference>
<dbReference type="InterPro" id="IPR002363">
    <property type="entry name" value="Ribosomal_uL10_CS_bac"/>
</dbReference>
<dbReference type="NCBIfam" id="NF000955">
    <property type="entry name" value="PRK00099.1-1"/>
    <property type="match status" value="1"/>
</dbReference>
<dbReference type="PANTHER" id="PTHR11560">
    <property type="entry name" value="39S RIBOSOMAL PROTEIN L10, MITOCHONDRIAL"/>
    <property type="match status" value="1"/>
</dbReference>
<dbReference type="Pfam" id="PF00466">
    <property type="entry name" value="Ribosomal_L10"/>
    <property type="match status" value="1"/>
</dbReference>
<dbReference type="SUPFAM" id="SSF160369">
    <property type="entry name" value="Ribosomal protein L10-like"/>
    <property type="match status" value="1"/>
</dbReference>
<dbReference type="PROSITE" id="PS01109">
    <property type="entry name" value="RIBOSOMAL_L10"/>
    <property type="match status" value="1"/>
</dbReference>
<protein>
    <recommendedName>
        <fullName evidence="1">Large ribosomal subunit protein uL10</fullName>
    </recommendedName>
    <alternativeName>
        <fullName evidence="2">50S ribosomal protein L10</fullName>
    </alternativeName>
</protein>
<feature type="chain" id="PRO_1000005495" description="Large ribosomal subunit protein uL10">
    <location>
        <begin position="1"/>
        <end position="165"/>
    </location>
</feature>
<accession>A7MQP7</accession>